<reference key="1">
    <citation type="journal article" date="2002" name="Proc. Natl. Acad. Sci. U.S.A.">
        <title>Emergence of multiple genotypes of H5N1 avian influenza viruses in Hong Kong SAR.</title>
        <authorList>
            <person name="Guan Y."/>
            <person name="Peiris J.S.M."/>
            <person name="Lipatov A.S."/>
            <person name="Ellis T.M."/>
            <person name="Dyrting K.C."/>
            <person name="Krauss S."/>
            <person name="Zhang L.J."/>
            <person name="Webster R.G."/>
            <person name="Shortridge K.F."/>
        </authorList>
    </citation>
    <scope>NUCLEOTIDE SEQUENCE [GENOMIC RNA]</scope>
</reference>
<proteinExistence type="inferred from homology"/>
<gene>
    <name evidence="1" type="primary">NA</name>
</gene>
<protein>
    <recommendedName>
        <fullName evidence="1">Neuraminidase</fullName>
        <ecNumber evidence="1">3.2.1.18</ecNumber>
    </recommendedName>
</protein>
<sequence length="428" mass="47181">MNPNQKIMTIGSICMVIGMISLVLQIGNMISIWASHSIQKMNQHQTEPCNQSIITYENNTWVNQTYVNISNTNFLTEKVVASIALSGNSSLCPISGWAVYSKDNGIRIGSKGDVFVIREPFISCSHLECRTFFLTQGSLLNDKHSNGTVKDRSPYRTLMSCPVGEAPSPYNSRFESVAWSASACHDGTSWLTIGISGPDNGAVAVLKYNGIITDTIKSWRNSILRTQESECACVNGSCFTVMTDGPSNGQASYKIFKIEKGKVVKSVELNAPNYHYEECSCYPDAGEITCVCRDNWHGSNRPWVSFDQNLEYQIGYICSGVFGDNPRPNDGTGSCDPVLPNGAYGVKGFSFKYGDGVWIGRTKSTNSRSGFEMIWDPNGWTGTDSNFSLKQDIVAMTDWSGYSGSFVQHPEMSGLDCIRPCLWVEPIR</sequence>
<dbReference type="EC" id="3.2.1.18" evidence="1"/>
<dbReference type="EMBL" id="AF509093">
    <property type="protein sequence ID" value="AAO52936.1"/>
    <property type="molecule type" value="Genomic_DNA"/>
</dbReference>
<dbReference type="SMR" id="Q809V4"/>
<dbReference type="CAZy" id="GH34">
    <property type="family name" value="Glycoside Hydrolase Family 34"/>
</dbReference>
<dbReference type="GlyCosmos" id="Q809V4">
    <property type="glycosylation" value="8 sites, No reported glycans"/>
</dbReference>
<dbReference type="GO" id="GO:0020002">
    <property type="term" value="C:host cell plasma membrane"/>
    <property type="evidence" value="ECO:0007669"/>
    <property type="project" value="UniProtKB-SubCell"/>
</dbReference>
<dbReference type="GO" id="GO:0016020">
    <property type="term" value="C:membrane"/>
    <property type="evidence" value="ECO:0007669"/>
    <property type="project" value="UniProtKB-KW"/>
</dbReference>
<dbReference type="GO" id="GO:0055036">
    <property type="term" value="C:virion membrane"/>
    <property type="evidence" value="ECO:0007669"/>
    <property type="project" value="UniProtKB-SubCell"/>
</dbReference>
<dbReference type="GO" id="GO:0004308">
    <property type="term" value="F:exo-alpha-sialidase activity"/>
    <property type="evidence" value="ECO:0007669"/>
    <property type="project" value="UniProtKB-EC"/>
</dbReference>
<dbReference type="GO" id="GO:0046872">
    <property type="term" value="F:metal ion binding"/>
    <property type="evidence" value="ECO:0007669"/>
    <property type="project" value="UniProtKB-KW"/>
</dbReference>
<dbReference type="GO" id="GO:0005975">
    <property type="term" value="P:carbohydrate metabolic process"/>
    <property type="evidence" value="ECO:0007669"/>
    <property type="project" value="InterPro"/>
</dbReference>
<dbReference type="Gene3D" id="2.120.10.10">
    <property type="match status" value="1"/>
</dbReference>
<dbReference type="HAMAP" id="MF_04071">
    <property type="entry name" value="INFV_NRAM"/>
    <property type="match status" value="1"/>
</dbReference>
<dbReference type="InterPro" id="IPR001860">
    <property type="entry name" value="Glyco_hydro_34"/>
</dbReference>
<dbReference type="InterPro" id="IPR036278">
    <property type="entry name" value="Sialidase_sf"/>
</dbReference>
<dbReference type="Pfam" id="PF00064">
    <property type="entry name" value="Neur"/>
    <property type="match status" value="1"/>
</dbReference>
<dbReference type="SUPFAM" id="SSF50939">
    <property type="entry name" value="Sialidases"/>
    <property type="match status" value="1"/>
</dbReference>
<comment type="function">
    <text evidence="1">Catalyzes the removal of terminal sialic acid residues from viral and cellular glycoconjugates. Cleaves off the terminal sialic acids on the glycosylated HA during virus budding to facilitate virus release. Additionally helps virus spread through the circulation by further removing sialic acids from the cell surface. These cleavages prevent self-aggregation and ensure the efficient spread of the progeny virus from cell to cell. Otherwise, infection would be limited to one round of replication. Described as a receptor-destroying enzyme because it cleaves a terminal sialic acid from the cellular receptors. May facilitate viral invasion of the upper airways by cleaving the sialic acid moieties on the mucin of the airway epithelial cells. Likely to plays a role in the budding process through its association with lipid rafts during intracellular transport. May additionally display a raft-association independent effect on budding. Plays a role in the determination of host range restriction on replication and virulence. Sialidase activity in late endosome/lysosome traffic seems to enhance virus replication.</text>
</comment>
<comment type="catalytic activity">
    <reaction evidence="1">
        <text>Hydrolysis of alpha-(2-&gt;3)-, alpha-(2-&gt;6)-, alpha-(2-&gt;8)- glycosidic linkages of terminal sialic acid residues in oligosaccharides, glycoproteins, glycolipids, colominic acid and synthetic substrates.</text>
        <dbReference type="EC" id="3.2.1.18"/>
    </reaction>
</comment>
<comment type="cofactor">
    <cofactor evidence="1">
        <name>Ca(2+)</name>
        <dbReference type="ChEBI" id="CHEBI:29108"/>
    </cofactor>
</comment>
<comment type="activity regulation">
    <text evidence="1">Inhibited by the neuraminidase inhibitors zanamivir (Relenza) and oseltamivir (Tamiflu). These drugs interfere with the release of progeny virus from infected cells and are effective against all influenza strains. Resistance to neuraminidase inhibitors is quite rare.</text>
</comment>
<comment type="subunit">
    <text evidence="1">Homotetramer.</text>
</comment>
<comment type="subcellular location">
    <subcellularLocation>
        <location evidence="1">Virion membrane</location>
    </subcellularLocation>
    <subcellularLocation>
        <location evidence="1">Host apical cell membrane</location>
        <topology evidence="1">Single-pass type II membrane protein</topology>
    </subcellularLocation>
    <text evidence="1">Preferentially accumulates at the apical plasma membrane in infected polarized epithelial cells, which is the virus assembly site. Uses lipid rafts for cell surface transport and apical sorting. In the virion, forms a mushroom-shaped spike on the surface of the membrane.</text>
</comment>
<comment type="domain">
    <text evidence="1">Intact N-terminus is essential for virion morphogenesis. Possesses two apical sorting signals, one in the ectodomain, which is likely to be a glycan, and the other in the transmembrane domain. The transmembrane domain also plays a role in lipid raft association.</text>
</comment>
<comment type="PTM">
    <text evidence="1">N-glycosylated.</text>
</comment>
<comment type="miscellaneous">
    <text>The influenza A genome consist of 8 RNA segments. Genetic variation of hemagglutinin and/or neuraminidase genes results in the emergence of new influenza strains. The mechanism of variation can be the result of point mutations or the result of genetic reassortment between segments of two different strains.</text>
</comment>
<comment type="similarity">
    <text evidence="1">Belongs to the glycosyl hydrolase 34 family.</text>
</comment>
<name>NRAM_I01A1</name>
<accession>Q809V4</accession>
<evidence type="ECO:0000255" key="1">
    <source>
        <dbReference type="HAMAP-Rule" id="MF_04071"/>
    </source>
</evidence>
<organismHost>
    <name type="scientific">Aves</name>
    <dbReference type="NCBI Taxonomy" id="8782"/>
</organismHost>
<organismHost>
    <name type="scientific">Felis catus</name>
    <name type="common">Cat</name>
    <name type="synonym">Felis silvestris catus</name>
    <dbReference type="NCBI Taxonomy" id="9685"/>
</organismHost>
<organismHost>
    <name type="scientific">Homo sapiens</name>
    <name type="common">Human</name>
    <dbReference type="NCBI Taxonomy" id="9606"/>
</organismHost>
<organismHost>
    <name type="scientific">Panthera pardus</name>
    <name type="common">Leopard</name>
    <name type="synonym">Felis pardus</name>
    <dbReference type="NCBI Taxonomy" id="9691"/>
</organismHost>
<organismHost>
    <name type="scientific">Panthera tigris</name>
    <name type="common">Tiger</name>
    <dbReference type="NCBI Taxonomy" id="9694"/>
</organismHost>
<organismHost>
    <name type="scientific">Sus scrofa</name>
    <name type="common">Pig</name>
    <dbReference type="NCBI Taxonomy" id="9823"/>
</organismHost>
<feature type="chain" id="PRO_0000310931" description="Neuraminidase">
    <location>
        <begin position="1"/>
        <end position="428" status="greater than"/>
    </location>
</feature>
<feature type="topological domain" description="Intravirion" evidence="1">
    <location>
        <begin position="1"/>
        <end position="6"/>
    </location>
</feature>
<feature type="transmembrane region" description="Helical" evidence="1">
    <location>
        <begin position="7"/>
        <end position="27"/>
    </location>
</feature>
<feature type="topological domain" description="Virion surface" evidence="1">
    <location>
        <begin position="28"/>
        <end position="428"/>
    </location>
</feature>
<feature type="region of interest" description="Involved in apical transport and lipid raft association" evidence="1">
    <location>
        <begin position="11"/>
        <end position="33"/>
    </location>
</feature>
<feature type="region of interest" description="Hypervariable stalk region" evidence="1">
    <location>
        <begin position="36"/>
        <end position="90"/>
    </location>
</feature>
<feature type="region of interest" description="Head of neuraminidase" evidence="1">
    <location>
        <begin position="91"/>
        <end position="428"/>
    </location>
</feature>
<feature type="active site" description="Proton donor/acceptor" evidence="1">
    <location>
        <position position="151"/>
    </location>
</feature>
<feature type="active site" description="Nucleophile" evidence="1">
    <location>
        <position position="402"/>
    </location>
</feature>
<feature type="binding site" evidence="1">
    <location>
        <position position="118"/>
    </location>
    <ligand>
        <name>substrate</name>
    </ligand>
</feature>
<feature type="binding site" evidence="1">
    <location>
        <position position="152"/>
    </location>
    <ligand>
        <name>substrate</name>
    </ligand>
</feature>
<feature type="binding site" evidence="1">
    <location>
        <begin position="277"/>
        <end position="278"/>
    </location>
    <ligand>
        <name>substrate</name>
    </ligand>
</feature>
<feature type="binding site" evidence="1">
    <location>
        <position position="293"/>
    </location>
    <ligand>
        <name>substrate</name>
    </ligand>
</feature>
<feature type="binding site" evidence="1">
    <location>
        <position position="294"/>
    </location>
    <ligand>
        <name>Ca(2+)</name>
        <dbReference type="ChEBI" id="CHEBI:29108"/>
    </ligand>
</feature>
<feature type="binding site" evidence="1">
    <location>
        <position position="298"/>
    </location>
    <ligand>
        <name>Ca(2+)</name>
        <dbReference type="ChEBI" id="CHEBI:29108"/>
    </ligand>
</feature>
<feature type="binding site" evidence="1">
    <location>
        <position position="324"/>
    </location>
    <ligand>
        <name>Ca(2+)</name>
        <dbReference type="ChEBI" id="CHEBI:29108"/>
    </ligand>
</feature>
<feature type="binding site" evidence="1">
    <location>
        <position position="368"/>
    </location>
    <ligand>
        <name>substrate</name>
    </ligand>
</feature>
<feature type="glycosylation site" description="N-linked (GlcNAc...) asparagine; by host" evidence="1">
    <location>
        <position position="50"/>
    </location>
</feature>
<feature type="glycosylation site" description="N-linked (GlcNAc...) asparagine; by host" evidence="1">
    <location>
        <position position="58"/>
    </location>
</feature>
<feature type="glycosylation site" description="N-linked (GlcNAc...) asparagine; by host" evidence="1">
    <location>
        <position position="63"/>
    </location>
</feature>
<feature type="glycosylation site" description="N-linked (GlcNAc...) asparagine; by host" evidence="1">
    <location>
        <position position="68"/>
    </location>
</feature>
<feature type="glycosylation site" description="N-linked (GlcNAc...) asparagine; by host" evidence="1">
    <location>
        <position position="88"/>
    </location>
</feature>
<feature type="glycosylation site" description="N-linked (GlcNAc...) asparagine; by host" evidence="1">
    <location>
        <position position="146"/>
    </location>
</feature>
<feature type="glycosylation site" description="N-linked (GlcNAc...) asparagine; by host" evidence="1">
    <location>
        <position position="235"/>
    </location>
</feature>
<feature type="glycosylation site" description="N-linked (GlcNAc...) asparagine; by host" evidence="1">
    <location>
        <position position="386"/>
    </location>
</feature>
<feature type="disulfide bond" evidence="1">
    <location>
        <begin position="92"/>
        <end position="417"/>
    </location>
</feature>
<feature type="disulfide bond" evidence="1">
    <location>
        <begin position="124"/>
        <end position="129"/>
    </location>
</feature>
<feature type="disulfide bond" evidence="1">
    <location>
        <begin position="184"/>
        <end position="231"/>
    </location>
</feature>
<feature type="disulfide bond" evidence="1">
    <location>
        <begin position="233"/>
        <end position="238"/>
    </location>
</feature>
<feature type="disulfide bond" evidence="1">
    <location>
        <begin position="279"/>
        <end position="292"/>
    </location>
</feature>
<feature type="disulfide bond" evidence="1">
    <location>
        <begin position="281"/>
        <end position="290"/>
    </location>
</feature>
<feature type="disulfide bond" evidence="1">
    <location>
        <begin position="318"/>
        <end position="335"/>
    </location>
</feature>
<feature type="non-terminal residue">
    <location>
        <position position="428"/>
    </location>
</feature>
<keyword id="KW-0106">Calcium</keyword>
<keyword id="KW-1015">Disulfide bond</keyword>
<keyword id="KW-0325">Glycoprotein</keyword>
<keyword id="KW-0326">Glycosidase</keyword>
<keyword id="KW-1032">Host cell membrane</keyword>
<keyword id="KW-1043">Host membrane</keyword>
<keyword id="KW-0378">Hydrolase</keyword>
<keyword id="KW-0472">Membrane</keyword>
<keyword id="KW-0479">Metal-binding</keyword>
<keyword id="KW-0735">Signal-anchor</keyword>
<keyword id="KW-0812">Transmembrane</keyword>
<keyword id="KW-1133">Transmembrane helix</keyword>
<keyword id="KW-0946">Virion</keyword>
<organism>
    <name type="scientific">Influenza A virus (strain A/Chicken/Hong Kong/YU562/2001 H5N1 genotype B)</name>
    <dbReference type="NCBI Taxonomy" id="196426"/>
    <lineage>
        <taxon>Viruses</taxon>
        <taxon>Riboviria</taxon>
        <taxon>Orthornavirae</taxon>
        <taxon>Negarnaviricota</taxon>
        <taxon>Polyploviricotina</taxon>
        <taxon>Insthoviricetes</taxon>
        <taxon>Articulavirales</taxon>
        <taxon>Orthomyxoviridae</taxon>
        <taxon>Alphainfluenzavirus</taxon>
        <taxon>Alphainfluenzavirus influenzae</taxon>
        <taxon>Influenza A virus</taxon>
    </lineage>
</organism>